<protein>
    <recommendedName>
        <fullName>Kunitz-type serine protease inhibitor 2</fullName>
        <shortName>BmTI-2</shortName>
    </recommendedName>
</protein>
<feature type="chain" id="PRO_0000155451" description="Kunitz-type serine protease inhibitor 2">
    <location>
        <begin position="1"/>
        <end position="25" status="greater than"/>
    </location>
</feature>
<feature type="domain" description="BPTI/Kunitz inhibitor" evidence="2">
    <location>
        <begin position="6"/>
        <end position="25" status="greater than"/>
    </location>
</feature>
<feature type="site" description="Reactive bond" evidence="1">
    <location>
        <begin position="17"/>
        <end position="18"/>
    </location>
</feature>
<feature type="non-terminal residue">
    <location>
        <position position="25"/>
    </location>
</feature>
<reference key="1">
    <citation type="journal article" date="2004" name="Biochimie">
        <title>Boophilus microplus tick larvae, a rich source of Kunitz type serine proteinase inhibitors.</title>
        <authorList>
            <person name="Sasaki S.D."/>
            <person name="Azzolini S.S."/>
            <person name="Hirata I.Y."/>
            <person name="Andreotti R."/>
            <person name="Tanaka A.S."/>
        </authorList>
    </citation>
    <scope>PROTEIN SEQUENCE</scope>
    <scope>FUNCTION</scope>
    <source>
        <tissue>Larva</tissue>
    </source>
</reference>
<name>BMTI2_RHIMP</name>
<evidence type="ECO:0000250" key="1"/>
<evidence type="ECO:0000255" key="2">
    <source>
        <dbReference type="PROSITE-ProRule" id="PRU00031"/>
    </source>
</evidence>
<evidence type="ECO:0000269" key="3">
    <source>
    </source>
</evidence>
<proteinExistence type="evidence at protein level"/>
<dbReference type="GO" id="GO:0005576">
    <property type="term" value="C:extracellular region"/>
    <property type="evidence" value="ECO:0007669"/>
    <property type="project" value="UniProtKB-SubCell"/>
</dbReference>
<dbReference type="GO" id="GO:0004867">
    <property type="term" value="F:serine-type endopeptidase inhibitor activity"/>
    <property type="evidence" value="ECO:0007669"/>
    <property type="project" value="UniProtKB-KW"/>
</dbReference>
<sequence>VTIGPVCELPKEVGGPCRGHIIPRY</sequence>
<comment type="function">
    <text evidence="3">Inhibits bovine trypsin, human plasma kallikrein and human neutrophil elastase.</text>
</comment>
<comment type="subcellular location">
    <subcellularLocation>
        <location>Secreted</location>
    </subcellularLocation>
</comment>
<accession>P83603</accession>
<organism>
    <name type="scientific">Rhipicephalus microplus</name>
    <name type="common">Cattle tick</name>
    <name type="synonym">Boophilus microplus</name>
    <dbReference type="NCBI Taxonomy" id="6941"/>
    <lineage>
        <taxon>Eukaryota</taxon>
        <taxon>Metazoa</taxon>
        <taxon>Ecdysozoa</taxon>
        <taxon>Arthropoda</taxon>
        <taxon>Chelicerata</taxon>
        <taxon>Arachnida</taxon>
        <taxon>Acari</taxon>
        <taxon>Parasitiformes</taxon>
        <taxon>Ixodida</taxon>
        <taxon>Ixodoidea</taxon>
        <taxon>Ixodidae</taxon>
        <taxon>Rhipicephalinae</taxon>
        <taxon>Rhipicephalus</taxon>
        <taxon>Boophilus</taxon>
    </lineage>
</organism>
<keyword id="KW-0903">Direct protein sequencing</keyword>
<keyword id="KW-0646">Protease inhibitor</keyword>
<keyword id="KW-0964">Secreted</keyword>
<keyword id="KW-0722">Serine protease inhibitor</keyword>